<name>TYSY_ALLAM</name>
<sequence length="264" mass="29725">MKQYLDLLQHVMENGSDRGDRTGTGTRSVFGYQMRFDLAQGFPVLTTKKLHLRSIIHELLWFLKGDTNIAYLKENGVSIWDEWADENGDLGPVYGAQWRSWPKPGGGHIDQIANLVESIKTNPNSRRHIVSAWNPAEVDEMALPPCHCLFQFYVADGKLSCQLYQRSADIFLGVPFNIASYALLTMMVAQVTGLKAGDFIHTLGDAHLYANHFEQARLQLTRQPKPLPVMRINPDVKDVFGFAFEDFSLENYSADPVIKAPIAV</sequence>
<proteinExistence type="inferred from homology"/>
<protein>
    <recommendedName>
        <fullName evidence="1">Thymidylate synthase</fullName>
        <shortName evidence="1">TS</shortName>
        <shortName evidence="1">TSase</shortName>
        <ecNumber evidence="1">2.1.1.45</ecNumber>
    </recommendedName>
</protein>
<reference key="1">
    <citation type="journal article" date="2009" name="J. Bacteriol.">
        <title>Genome sequences of three Agrobacterium biovars help elucidate the evolution of multichromosome genomes in bacteria.</title>
        <authorList>
            <person name="Slater S.C."/>
            <person name="Goldman B.S."/>
            <person name="Goodner B."/>
            <person name="Setubal J.C."/>
            <person name="Farrand S.K."/>
            <person name="Nester E.W."/>
            <person name="Burr T.J."/>
            <person name="Banta L."/>
            <person name="Dickerman A.W."/>
            <person name="Paulsen I."/>
            <person name="Otten L."/>
            <person name="Suen G."/>
            <person name="Welch R."/>
            <person name="Almeida N.F."/>
            <person name="Arnold F."/>
            <person name="Burton O.T."/>
            <person name="Du Z."/>
            <person name="Ewing A."/>
            <person name="Godsy E."/>
            <person name="Heisel S."/>
            <person name="Houmiel K.L."/>
            <person name="Jhaveri J."/>
            <person name="Lu J."/>
            <person name="Miller N.M."/>
            <person name="Norton S."/>
            <person name="Chen Q."/>
            <person name="Phoolcharoen W."/>
            <person name="Ohlin V."/>
            <person name="Ondrusek D."/>
            <person name="Pride N."/>
            <person name="Stricklin S.L."/>
            <person name="Sun J."/>
            <person name="Wheeler C."/>
            <person name="Wilson L."/>
            <person name="Zhu H."/>
            <person name="Wood D.W."/>
        </authorList>
    </citation>
    <scope>NUCLEOTIDE SEQUENCE [LARGE SCALE GENOMIC DNA]</scope>
    <source>
        <strain>ATCC BAA-846 / DSM 112012 / S4</strain>
    </source>
</reference>
<comment type="function">
    <text evidence="1">Catalyzes the reductive methylation of 2'-deoxyuridine-5'-monophosphate (dUMP) to 2'-deoxythymidine-5'-monophosphate (dTMP) while utilizing 5,10-methylenetetrahydrofolate (mTHF) as the methyl donor and reductant in the reaction, yielding dihydrofolate (DHF) as a by-product. This enzymatic reaction provides an intracellular de novo source of dTMP, an essential precursor for DNA biosynthesis.</text>
</comment>
<comment type="catalytic activity">
    <reaction evidence="1">
        <text>dUMP + (6R)-5,10-methylene-5,6,7,8-tetrahydrofolate = 7,8-dihydrofolate + dTMP</text>
        <dbReference type="Rhea" id="RHEA:12104"/>
        <dbReference type="ChEBI" id="CHEBI:15636"/>
        <dbReference type="ChEBI" id="CHEBI:57451"/>
        <dbReference type="ChEBI" id="CHEBI:63528"/>
        <dbReference type="ChEBI" id="CHEBI:246422"/>
        <dbReference type="EC" id="2.1.1.45"/>
    </reaction>
</comment>
<comment type="pathway">
    <text evidence="1">Pyrimidine metabolism; dTTP biosynthesis.</text>
</comment>
<comment type="subunit">
    <text evidence="1">Homodimer.</text>
</comment>
<comment type="subcellular location">
    <subcellularLocation>
        <location evidence="1">Cytoplasm</location>
    </subcellularLocation>
</comment>
<comment type="similarity">
    <text evidence="1">Belongs to the thymidylate synthase family. Bacterial-type ThyA subfamily.</text>
</comment>
<accession>B9JXQ5</accession>
<gene>
    <name evidence="1" type="primary">thyA</name>
    <name type="ordered locus">Avi_2822</name>
</gene>
<keyword id="KW-0963">Cytoplasm</keyword>
<keyword id="KW-0489">Methyltransferase</keyword>
<keyword id="KW-0545">Nucleotide biosynthesis</keyword>
<keyword id="KW-1185">Reference proteome</keyword>
<keyword id="KW-0808">Transferase</keyword>
<evidence type="ECO:0000255" key="1">
    <source>
        <dbReference type="HAMAP-Rule" id="MF_00008"/>
    </source>
</evidence>
<organism>
    <name type="scientific">Allorhizobium ampelinum (strain ATCC BAA-846 / DSM 112012 / S4)</name>
    <name type="common">Agrobacterium vitis (strain S4)</name>
    <dbReference type="NCBI Taxonomy" id="311402"/>
    <lineage>
        <taxon>Bacteria</taxon>
        <taxon>Pseudomonadati</taxon>
        <taxon>Pseudomonadota</taxon>
        <taxon>Alphaproteobacteria</taxon>
        <taxon>Hyphomicrobiales</taxon>
        <taxon>Rhizobiaceae</taxon>
        <taxon>Rhizobium/Agrobacterium group</taxon>
        <taxon>Allorhizobium</taxon>
        <taxon>Allorhizobium ampelinum</taxon>
    </lineage>
</organism>
<feature type="chain" id="PRO_1000197231" description="Thymidylate synthase">
    <location>
        <begin position="1"/>
        <end position="264"/>
    </location>
</feature>
<feature type="active site" description="Nucleophile" evidence="1">
    <location>
        <position position="146"/>
    </location>
</feature>
<feature type="binding site" description="in other chain" evidence="1">
    <location>
        <position position="21"/>
    </location>
    <ligand>
        <name>dUMP</name>
        <dbReference type="ChEBI" id="CHEBI:246422"/>
        <note>ligand shared between dimeric partners</note>
    </ligand>
</feature>
<feature type="binding site" evidence="1">
    <location>
        <position position="51"/>
    </location>
    <ligand>
        <name>(6R)-5,10-methylene-5,6,7,8-tetrahydrofolate</name>
        <dbReference type="ChEBI" id="CHEBI:15636"/>
    </ligand>
</feature>
<feature type="binding site" evidence="1">
    <location>
        <begin position="126"/>
        <end position="127"/>
    </location>
    <ligand>
        <name>dUMP</name>
        <dbReference type="ChEBI" id="CHEBI:246422"/>
        <note>ligand shared between dimeric partners</note>
    </ligand>
</feature>
<feature type="binding site" description="in other chain" evidence="1">
    <location>
        <begin position="166"/>
        <end position="169"/>
    </location>
    <ligand>
        <name>dUMP</name>
        <dbReference type="ChEBI" id="CHEBI:246422"/>
        <note>ligand shared between dimeric partners</note>
    </ligand>
</feature>
<feature type="binding site" evidence="1">
    <location>
        <position position="169"/>
    </location>
    <ligand>
        <name>(6R)-5,10-methylene-5,6,7,8-tetrahydrofolate</name>
        <dbReference type="ChEBI" id="CHEBI:15636"/>
    </ligand>
</feature>
<feature type="binding site" description="in other chain" evidence="1">
    <location>
        <position position="177"/>
    </location>
    <ligand>
        <name>dUMP</name>
        <dbReference type="ChEBI" id="CHEBI:246422"/>
        <note>ligand shared between dimeric partners</note>
    </ligand>
</feature>
<feature type="binding site" description="in other chain" evidence="1">
    <location>
        <begin position="207"/>
        <end position="209"/>
    </location>
    <ligand>
        <name>dUMP</name>
        <dbReference type="ChEBI" id="CHEBI:246422"/>
        <note>ligand shared between dimeric partners</note>
    </ligand>
</feature>
<feature type="binding site" evidence="1">
    <location>
        <position position="263"/>
    </location>
    <ligand>
        <name>(6R)-5,10-methylene-5,6,7,8-tetrahydrofolate</name>
        <dbReference type="ChEBI" id="CHEBI:15636"/>
    </ligand>
</feature>
<dbReference type="EC" id="2.1.1.45" evidence="1"/>
<dbReference type="EMBL" id="CP000633">
    <property type="protein sequence ID" value="ACM37032.1"/>
    <property type="molecule type" value="Genomic_DNA"/>
</dbReference>
<dbReference type="RefSeq" id="WP_015916453.1">
    <property type="nucleotide sequence ID" value="NC_011989.1"/>
</dbReference>
<dbReference type="SMR" id="B9JXQ5"/>
<dbReference type="STRING" id="311402.Avi_2822"/>
<dbReference type="KEGG" id="avi:Avi_2822"/>
<dbReference type="eggNOG" id="COG0207">
    <property type="taxonomic scope" value="Bacteria"/>
</dbReference>
<dbReference type="HOGENOM" id="CLU_021669_0_0_5"/>
<dbReference type="UniPathway" id="UPA00575"/>
<dbReference type="Proteomes" id="UP000001596">
    <property type="component" value="Chromosome 1"/>
</dbReference>
<dbReference type="GO" id="GO:0005829">
    <property type="term" value="C:cytosol"/>
    <property type="evidence" value="ECO:0007669"/>
    <property type="project" value="TreeGrafter"/>
</dbReference>
<dbReference type="GO" id="GO:0004799">
    <property type="term" value="F:thymidylate synthase activity"/>
    <property type="evidence" value="ECO:0007669"/>
    <property type="project" value="UniProtKB-UniRule"/>
</dbReference>
<dbReference type="GO" id="GO:0006231">
    <property type="term" value="P:dTMP biosynthetic process"/>
    <property type="evidence" value="ECO:0007669"/>
    <property type="project" value="UniProtKB-UniRule"/>
</dbReference>
<dbReference type="GO" id="GO:0006235">
    <property type="term" value="P:dTTP biosynthetic process"/>
    <property type="evidence" value="ECO:0007669"/>
    <property type="project" value="UniProtKB-UniRule"/>
</dbReference>
<dbReference type="GO" id="GO:0032259">
    <property type="term" value="P:methylation"/>
    <property type="evidence" value="ECO:0007669"/>
    <property type="project" value="UniProtKB-KW"/>
</dbReference>
<dbReference type="CDD" id="cd00351">
    <property type="entry name" value="TS_Pyrimidine_HMase"/>
    <property type="match status" value="1"/>
</dbReference>
<dbReference type="FunFam" id="3.30.572.10:FF:000001">
    <property type="entry name" value="Thymidylate synthase"/>
    <property type="match status" value="1"/>
</dbReference>
<dbReference type="Gene3D" id="3.30.572.10">
    <property type="entry name" value="Thymidylate synthase/dCMP hydroxymethylase domain"/>
    <property type="match status" value="1"/>
</dbReference>
<dbReference type="HAMAP" id="MF_00008">
    <property type="entry name" value="Thymidy_synth_bact"/>
    <property type="match status" value="1"/>
</dbReference>
<dbReference type="InterPro" id="IPR045097">
    <property type="entry name" value="Thymidate_synth/dCMP_Mease"/>
</dbReference>
<dbReference type="InterPro" id="IPR023451">
    <property type="entry name" value="Thymidate_synth/dCMP_Mease_dom"/>
</dbReference>
<dbReference type="InterPro" id="IPR036926">
    <property type="entry name" value="Thymidate_synth/dCMP_Mease_sf"/>
</dbReference>
<dbReference type="InterPro" id="IPR000398">
    <property type="entry name" value="Thymidylate_synthase"/>
</dbReference>
<dbReference type="InterPro" id="IPR020940">
    <property type="entry name" value="Thymidylate_synthase_AS"/>
</dbReference>
<dbReference type="NCBIfam" id="NF002497">
    <property type="entry name" value="PRK01827.1-3"/>
    <property type="match status" value="1"/>
</dbReference>
<dbReference type="NCBIfam" id="NF002499">
    <property type="entry name" value="PRK01827.1-5"/>
    <property type="match status" value="1"/>
</dbReference>
<dbReference type="NCBIfam" id="TIGR03284">
    <property type="entry name" value="thym_sym"/>
    <property type="match status" value="2"/>
</dbReference>
<dbReference type="PANTHER" id="PTHR11548:SF9">
    <property type="entry name" value="THYMIDYLATE SYNTHASE"/>
    <property type="match status" value="1"/>
</dbReference>
<dbReference type="PANTHER" id="PTHR11548">
    <property type="entry name" value="THYMIDYLATE SYNTHASE 1"/>
    <property type="match status" value="1"/>
</dbReference>
<dbReference type="Pfam" id="PF00303">
    <property type="entry name" value="Thymidylat_synt"/>
    <property type="match status" value="1"/>
</dbReference>
<dbReference type="PRINTS" id="PR00108">
    <property type="entry name" value="THYMDSNTHASE"/>
</dbReference>
<dbReference type="SUPFAM" id="SSF55831">
    <property type="entry name" value="Thymidylate synthase/dCMP hydroxymethylase"/>
    <property type="match status" value="1"/>
</dbReference>
<dbReference type="PROSITE" id="PS00091">
    <property type="entry name" value="THYMIDYLATE_SYNTHASE"/>
    <property type="match status" value="1"/>
</dbReference>